<keyword id="KW-0002">3D-structure</keyword>
<keyword id="KW-0963">Cytoplasm</keyword>
<keyword id="KW-0539">Nucleus</keyword>
<keyword id="KW-1185">Reference proteome</keyword>
<keyword id="KW-0687">Ribonucleoprotein</keyword>
<keyword id="KW-0689">Ribosomal protein</keyword>
<organism>
    <name type="scientific">Caenorhabditis elegans</name>
    <dbReference type="NCBI Taxonomy" id="6239"/>
    <lineage>
        <taxon>Eukaryota</taxon>
        <taxon>Metazoa</taxon>
        <taxon>Ecdysozoa</taxon>
        <taxon>Nematoda</taxon>
        <taxon>Chromadorea</taxon>
        <taxon>Rhabditida</taxon>
        <taxon>Rhabditina</taxon>
        <taxon>Rhabditomorpha</taxon>
        <taxon>Rhabditoidea</taxon>
        <taxon>Rhabditidae</taxon>
        <taxon>Peloderinae</taxon>
        <taxon>Caenorhabditis</taxon>
    </lineage>
</organism>
<protein>
    <recommendedName>
        <fullName evidence="2">Small ribosomal subunit protein uS11</fullName>
    </recommendedName>
    <alternativeName>
        <fullName>40S ribosomal protein S14</fullName>
    </alternativeName>
</protein>
<feature type="chain" id="PRO_0000123341" description="Small ribosomal subunit protein uS11">
    <location>
        <begin position="1"/>
        <end position="152"/>
    </location>
</feature>
<comment type="function">
    <text evidence="1">Component of the small ribosomal subunit. The ribosome is a large ribonucleoprotein complex responsible for the synthesis of proteins in the cell. Part of the small subunit (SSU) processome, first precursor of the small eukaryotic ribosomal subunit. During the assembly of the SSU processome in the nucleolus, many ribosome biogenesis factors, an RNA chaperone and ribosomal proteins associate with the nascent pre-rRNA and work in concert to generate RNA folding, modifications, rearrangements and cleavage as well as targeted degradation of pre-ribosomal RNA by the RNA exosome.</text>
</comment>
<comment type="subunit">
    <text evidence="1">Component of the small ribosomal subunit. Part of the small subunit (SSU) processome, composed of more than 70 proteins and the RNA chaperone small nucleolar RNA (snoRNA) U3.</text>
</comment>
<comment type="subcellular location">
    <subcellularLocation>
        <location evidence="1">Cytoplasm</location>
    </subcellularLocation>
    <subcellularLocation>
        <location evidence="1">Nucleus</location>
        <location evidence="1">Nucleolus</location>
    </subcellularLocation>
</comment>
<comment type="similarity">
    <text evidence="2">Belongs to the universal ribosomal protein uS11 family.</text>
</comment>
<sequence>MAPARKGKAKEEQAVVSLGPQAKEGELIFGVAHIFASFNDTFVHITDISGRETIVRVTGGMKVKADRDESSPYAAMLAAQDVADRCKQLGINALHIKLRATGGTRTKTPGPGAQSALRALARAGMKIGRIEDVTPIPSDCTRRKGGRRGRRL</sequence>
<gene>
    <name type="primary">rps-14</name>
    <name type="ORF">F37C12.9</name>
</gene>
<reference key="1">
    <citation type="journal article" date="1998" name="Science">
        <title>Genome sequence of the nematode C. elegans: a platform for investigating biology.</title>
        <authorList>
            <consortium name="The C. elegans sequencing consortium"/>
        </authorList>
    </citation>
    <scope>NUCLEOTIDE SEQUENCE [LARGE SCALE GENOMIC DNA]</scope>
    <source>
        <strain>Bristol N2</strain>
    </source>
</reference>
<dbReference type="EMBL" id="FO081316">
    <property type="protein sequence ID" value="CCD70739.1"/>
    <property type="molecule type" value="Genomic_DNA"/>
</dbReference>
<dbReference type="PIR" id="T28833">
    <property type="entry name" value="T28833"/>
</dbReference>
<dbReference type="RefSeq" id="NP_498572.1">
    <property type="nucleotide sequence ID" value="NM_066171.10"/>
</dbReference>
<dbReference type="PDB" id="9BH5">
    <property type="method" value="EM"/>
    <property type="resolution" value="2.63 A"/>
    <property type="chains" value="AO=1-152"/>
</dbReference>
<dbReference type="PDB" id="9CAI">
    <property type="method" value="EM"/>
    <property type="resolution" value="2.59 A"/>
    <property type="chains" value="AO=1-152"/>
</dbReference>
<dbReference type="PDBsum" id="9BH5"/>
<dbReference type="PDBsum" id="9CAI"/>
<dbReference type="EMDB" id="EMD-44533"/>
<dbReference type="EMDB" id="EMD-45392"/>
<dbReference type="SMR" id="P48150"/>
<dbReference type="BioGRID" id="41218">
    <property type="interactions" value="102"/>
</dbReference>
<dbReference type="DIP" id="DIP-25515N"/>
<dbReference type="FunCoup" id="P48150">
    <property type="interactions" value="1370"/>
</dbReference>
<dbReference type="STRING" id="6239.F37C12.9.2"/>
<dbReference type="iPTMnet" id="P48150"/>
<dbReference type="PaxDb" id="6239-F37C12.9.1"/>
<dbReference type="PeptideAtlas" id="P48150"/>
<dbReference type="EnsemblMetazoa" id="F37C12.9.1">
    <property type="protein sequence ID" value="F37C12.9.1"/>
    <property type="gene ID" value="WBGene00004483"/>
</dbReference>
<dbReference type="GeneID" id="176006"/>
<dbReference type="KEGG" id="cel:CELE_F37C12.9"/>
<dbReference type="UCSC" id="F37C12.9.1">
    <property type="organism name" value="c. elegans"/>
</dbReference>
<dbReference type="AGR" id="WB:WBGene00004483"/>
<dbReference type="CTD" id="176006"/>
<dbReference type="WormBase" id="F37C12.9">
    <property type="protein sequence ID" value="CE00821"/>
    <property type="gene ID" value="WBGene00004483"/>
    <property type="gene designation" value="rps-14"/>
</dbReference>
<dbReference type="eggNOG" id="KOG0407">
    <property type="taxonomic scope" value="Eukaryota"/>
</dbReference>
<dbReference type="GeneTree" id="ENSGT00390000000703"/>
<dbReference type="HOGENOM" id="CLU_072439_6_0_1"/>
<dbReference type="InParanoid" id="P48150"/>
<dbReference type="OMA" id="KWGVAHI"/>
<dbReference type="OrthoDB" id="1677536at2759"/>
<dbReference type="PhylomeDB" id="P48150"/>
<dbReference type="Reactome" id="R-CEL-156827">
    <property type="pathway name" value="L13a-mediated translational silencing of Ceruloplasmin expression"/>
</dbReference>
<dbReference type="Reactome" id="R-CEL-1799339">
    <property type="pathway name" value="SRP-dependent cotranslational protein targeting to membrane"/>
</dbReference>
<dbReference type="Reactome" id="R-CEL-6791226">
    <property type="pathway name" value="Major pathway of rRNA processing in the nucleolus and cytosol"/>
</dbReference>
<dbReference type="Reactome" id="R-CEL-72649">
    <property type="pathway name" value="Translation initiation complex formation"/>
</dbReference>
<dbReference type="Reactome" id="R-CEL-72689">
    <property type="pathway name" value="Formation of a pool of free 40S subunits"/>
</dbReference>
<dbReference type="Reactome" id="R-CEL-72695">
    <property type="pathway name" value="Formation of the ternary complex, and subsequently, the 43S complex"/>
</dbReference>
<dbReference type="Reactome" id="R-CEL-72702">
    <property type="pathway name" value="Ribosomal scanning and start codon recognition"/>
</dbReference>
<dbReference type="Reactome" id="R-CEL-72706">
    <property type="pathway name" value="GTP hydrolysis and joining of the 60S ribosomal subunit"/>
</dbReference>
<dbReference type="Reactome" id="R-CEL-975956">
    <property type="pathway name" value="Nonsense Mediated Decay (NMD) independent of the Exon Junction Complex (EJC)"/>
</dbReference>
<dbReference type="Reactome" id="R-CEL-975957">
    <property type="pathway name" value="Nonsense Mediated Decay (NMD) enhanced by the Exon Junction Complex (EJC)"/>
</dbReference>
<dbReference type="PRO" id="PR:P48150"/>
<dbReference type="Proteomes" id="UP000001940">
    <property type="component" value="Chromosome III"/>
</dbReference>
<dbReference type="Bgee" id="WBGene00004483">
    <property type="expression patterns" value="Expressed in larva and 4 other cell types or tissues"/>
</dbReference>
<dbReference type="GO" id="GO:0022627">
    <property type="term" value="C:cytosolic small ribosomal subunit"/>
    <property type="evidence" value="ECO:0000318"/>
    <property type="project" value="GO_Central"/>
</dbReference>
<dbReference type="GO" id="GO:0005730">
    <property type="term" value="C:nucleolus"/>
    <property type="evidence" value="ECO:0007669"/>
    <property type="project" value="UniProtKB-SubCell"/>
</dbReference>
<dbReference type="GO" id="GO:0032040">
    <property type="term" value="C:small-subunit processome"/>
    <property type="evidence" value="ECO:0000250"/>
    <property type="project" value="UniProtKB"/>
</dbReference>
<dbReference type="GO" id="GO:0003735">
    <property type="term" value="F:structural constituent of ribosome"/>
    <property type="evidence" value="ECO:0000318"/>
    <property type="project" value="GO_Central"/>
</dbReference>
<dbReference type="GO" id="GO:0000028">
    <property type="term" value="P:ribosomal small subunit assembly"/>
    <property type="evidence" value="ECO:0000318"/>
    <property type="project" value="GO_Central"/>
</dbReference>
<dbReference type="GO" id="GO:0042274">
    <property type="term" value="P:ribosomal small subunit biogenesis"/>
    <property type="evidence" value="ECO:0000250"/>
    <property type="project" value="UniProtKB"/>
</dbReference>
<dbReference type="GO" id="GO:0006412">
    <property type="term" value="P:translation"/>
    <property type="evidence" value="ECO:0000318"/>
    <property type="project" value="GO_Central"/>
</dbReference>
<dbReference type="FunFam" id="3.30.420.80:FF:000002">
    <property type="entry name" value="40S ribosomal protein S14"/>
    <property type="match status" value="1"/>
</dbReference>
<dbReference type="Gene3D" id="3.30.420.80">
    <property type="entry name" value="Ribosomal protein S11"/>
    <property type="match status" value="1"/>
</dbReference>
<dbReference type="HAMAP" id="MF_01310">
    <property type="entry name" value="Ribosomal_uS11"/>
    <property type="match status" value="1"/>
</dbReference>
<dbReference type="InterPro" id="IPR001971">
    <property type="entry name" value="Ribosomal_uS11"/>
</dbReference>
<dbReference type="InterPro" id="IPR018102">
    <property type="entry name" value="Ribosomal_uS11_CS"/>
</dbReference>
<dbReference type="InterPro" id="IPR036967">
    <property type="entry name" value="Ribosomal_uS11_sf"/>
</dbReference>
<dbReference type="NCBIfam" id="NF007176">
    <property type="entry name" value="PRK09607.1"/>
    <property type="match status" value="1"/>
</dbReference>
<dbReference type="PANTHER" id="PTHR11759">
    <property type="entry name" value="40S RIBOSOMAL PROTEIN S14/30S RIBOSOMAL PROTEIN S11"/>
    <property type="match status" value="1"/>
</dbReference>
<dbReference type="Pfam" id="PF00411">
    <property type="entry name" value="Ribosomal_S11"/>
    <property type="match status" value="1"/>
</dbReference>
<dbReference type="PIRSF" id="PIRSF002131">
    <property type="entry name" value="Ribosomal_S11"/>
    <property type="match status" value="1"/>
</dbReference>
<dbReference type="SUPFAM" id="SSF53137">
    <property type="entry name" value="Translational machinery components"/>
    <property type="match status" value="1"/>
</dbReference>
<dbReference type="PROSITE" id="PS00054">
    <property type="entry name" value="RIBOSOMAL_S11"/>
    <property type="match status" value="1"/>
</dbReference>
<proteinExistence type="evidence at protein level"/>
<evidence type="ECO:0000250" key="1">
    <source>
        <dbReference type="UniProtKB" id="P62263"/>
    </source>
</evidence>
<evidence type="ECO:0000305" key="2"/>
<accession>P48150</accession>
<name>RS14_CAEEL</name>